<comment type="function">
    <text evidence="1">Proton-dependent permease that transports di- and tripeptides.</text>
</comment>
<comment type="subcellular location">
    <subcellularLocation>
        <location evidence="1">Cell inner membrane</location>
        <topology evidence="1">Multi-pass membrane protein</topology>
    </subcellularLocation>
</comment>
<comment type="similarity">
    <text evidence="1">Belongs to the major facilitator superfamily. Proton-dependent oligopeptide transporter (POT/PTR) (TC 2.A.17) family. DtpA subfamily.</text>
</comment>
<comment type="sequence caution" evidence="2">
    <conflict type="erroneous initiation">
        <sequence resource="EMBL-CDS" id="CBA30607"/>
    </conflict>
    <text>Extended N-terminus.</text>
</comment>
<accession>C9Y3M8</accession>
<protein>
    <recommendedName>
        <fullName evidence="1">Dipeptide and tripeptide permease A</fullName>
    </recommendedName>
</protein>
<evidence type="ECO:0000255" key="1">
    <source>
        <dbReference type="HAMAP-Rule" id="MF_01878"/>
    </source>
</evidence>
<evidence type="ECO:0000305" key="2"/>
<keyword id="KW-0997">Cell inner membrane</keyword>
<keyword id="KW-1003">Cell membrane</keyword>
<keyword id="KW-0472">Membrane</keyword>
<keyword id="KW-0571">Peptide transport</keyword>
<keyword id="KW-0653">Protein transport</keyword>
<keyword id="KW-0812">Transmembrane</keyword>
<keyword id="KW-1133">Transmembrane helix</keyword>
<keyword id="KW-0813">Transport</keyword>
<organism>
    <name type="scientific">Cronobacter turicensis (strain DSM 18703 / CCUG 55852 / LMG 23827 / z3032)</name>
    <dbReference type="NCBI Taxonomy" id="693216"/>
    <lineage>
        <taxon>Bacteria</taxon>
        <taxon>Pseudomonadati</taxon>
        <taxon>Pseudomonadota</taxon>
        <taxon>Gammaproteobacteria</taxon>
        <taxon>Enterobacterales</taxon>
        <taxon>Enterobacteriaceae</taxon>
        <taxon>Cronobacter</taxon>
    </lineage>
</organism>
<name>DTPA_CROTZ</name>
<gene>
    <name evidence="1" type="primary">dtpA</name>
    <name type="ordered locus">Ctu_20000</name>
</gene>
<sequence>MSTANKKPAESVSMNAFKQPRSFYLIFSIELWERFGFYGLQGIMAVYLVKQLGMSEADSITLFSSFSALVYGLVAIGGWLGDKVLGTKRVIMLGTIVLAIGYALVAWSGHDAAIVYFGMATIAVGNGLFKANPSALLSTCYEKDDPRLDGAFTMYYMAINIGSFFSMLATPWLAEKFGWSVAFSLSFVGMLITLVNFIFCKKWVKDYGSKPDFAPLHVGKLLATIVGIVVLVAIATWLLHNQGIARLVLGVVALGIVIIFAKEAFAMQGAARRKMIVAFILMLEAIVFFVLYQQMPTSLNFFAIRNVEHSILGIAFQPEQFQALNPFWIMIGSPILAAIYNKMGDRLPMPFKFTIGMLLCSGAFLVLPLGAKFASEAGIVSVNWLILSYALQSIGELMISGLGLAMVAQLVPQRLMGFIMGSWFLTTAGAAMIAGKVANLMAVPENVSDPLQSLEVYGRVFMQIGIATGVIAVLMLLTAPLLNRMTQEDKPKETDTAHA</sequence>
<feature type="chain" id="PRO_0000395174" description="Dipeptide and tripeptide permease A">
    <location>
        <begin position="1"/>
        <end position="499"/>
    </location>
</feature>
<feature type="topological domain" description="Cytoplasmic" evidence="1">
    <location>
        <begin position="1"/>
        <end position="34"/>
    </location>
</feature>
<feature type="transmembrane region" description="Helical" evidence="1">
    <location>
        <begin position="35"/>
        <end position="55"/>
    </location>
</feature>
<feature type="topological domain" description="Periplasmic" evidence="1">
    <location>
        <begin position="56"/>
        <end position="59"/>
    </location>
</feature>
<feature type="transmembrane region" description="Helical" evidence="1">
    <location>
        <begin position="60"/>
        <end position="80"/>
    </location>
</feature>
<feature type="topological domain" description="Cytoplasmic" evidence="1">
    <location>
        <begin position="81"/>
        <end position="89"/>
    </location>
</feature>
<feature type="transmembrane region" description="Helical" evidence="1">
    <location>
        <begin position="90"/>
        <end position="110"/>
    </location>
</feature>
<feature type="topological domain" description="Periplasmic" evidence="1">
    <location>
        <position position="111"/>
    </location>
</feature>
<feature type="transmembrane region" description="Helical" evidence="1">
    <location>
        <begin position="112"/>
        <end position="132"/>
    </location>
</feature>
<feature type="topological domain" description="Cytoplasmic" evidence="1">
    <location>
        <begin position="133"/>
        <end position="153"/>
    </location>
</feature>
<feature type="transmembrane region" description="Helical" evidence="1">
    <location>
        <begin position="154"/>
        <end position="174"/>
    </location>
</feature>
<feature type="topological domain" description="Periplasmic" evidence="1">
    <location>
        <begin position="175"/>
        <end position="178"/>
    </location>
</feature>
<feature type="transmembrane region" description="Helical" evidence="1">
    <location>
        <begin position="179"/>
        <end position="199"/>
    </location>
</feature>
<feature type="topological domain" description="Cytoplasmic" evidence="1">
    <location>
        <begin position="200"/>
        <end position="217"/>
    </location>
</feature>
<feature type="transmembrane region" description="Helical" evidence="1">
    <location>
        <begin position="218"/>
        <end position="238"/>
    </location>
</feature>
<feature type="topological domain" description="Periplasmic" evidence="1">
    <location>
        <begin position="239"/>
        <end position="246"/>
    </location>
</feature>
<feature type="transmembrane region" description="Helical" evidence="1">
    <location>
        <begin position="247"/>
        <end position="267"/>
    </location>
</feature>
<feature type="topological domain" description="Cytoplasmic" evidence="1">
    <location>
        <begin position="268"/>
        <end position="274"/>
    </location>
</feature>
<feature type="transmembrane region" description="Helical" evidence="1">
    <location>
        <begin position="275"/>
        <end position="295"/>
    </location>
</feature>
<feature type="topological domain" description="Periplasmic" evidence="1">
    <location>
        <begin position="296"/>
        <end position="320"/>
    </location>
</feature>
<feature type="transmembrane region" description="Helical" evidence="1">
    <location>
        <begin position="321"/>
        <end position="341"/>
    </location>
</feature>
<feature type="topological domain" description="Cytoplasmic" evidence="1">
    <location>
        <begin position="342"/>
        <end position="350"/>
    </location>
</feature>
<feature type="transmembrane region" description="Helical" evidence="1">
    <location>
        <begin position="351"/>
        <end position="371"/>
    </location>
</feature>
<feature type="topological domain" description="Periplasmic" evidence="1">
    <location>
        <begin position="372"/>
        <end position="383"/>
    </location>
</feature>
<feature type="transmembrane region" description="Helical" evidence="1">
    <location>
        <begin position="384"/>
        <end position="404"/>
    </location>
</feature>
<feature type="topological domain" description="Cytoplasmic" evidence="1">
    <location>
        <begin position="405"/>
        <end position="414"/>
    </location>
</feature>
<feature type="transmembrane region" description="Helical" evidence="1">
    <location>
        <begin position="415"/>
        <end position="435"/>
    </location>
</feature>
<feature type="topological domain" description="Periplasmic" evidence="1">
    <location>
        <begin position="436"/>
        <end position="459"/>
    </location>
</feature>
<feature type="transmembrane region" description="Helical" evidence="1">
    <location>
        <begin position="460"/>
        <end position="480"/>
    </location>
</feature>
<feature type="topological domain" description="Cytoplasmic" evidence="1">
    <location>
        <begin position="481"/>
        <end position="499"/>
    </location>
</feature>
<reference key="1">
    <citation type="journal article" date="2011" name="J. Bacteriol.">
        <title>Complete genome sequence of Cronobacter turicensis LMG 23827, a food-borne pathogen causing deaths in neonates.</title>
        <authorList>
            <person name="Stephan R."/>
            <person name="Lehner A."/>
            <person name="Tischler P."/>
            <person name="Rattei T."/>
        </authorList>
    </citation>
    <scope>NUCLEOTIDE SEQUENCE [LARGE SCALE GENOMIC DNA]</scope>
    <source>
        <strain>DSM 18703 / CCUG 55852 / LMG 23827 / z3032</strain>
    </source>
</reference>
<proteinExistence type="inferred from homology"/>
<dbReference type="EMBL" id="FN543093">
    <property type="protein sequence ID" value="CBA30607.1"/>
    <property type="status" value="ALT_INIT"/>
    <property type="molecule type" value="Genomic_DNA"/>
</dbReference>
<dbReference type="SMR" id="C9Y3M8"/>
<dbReference type="KEGG" id="ctu:CTU_20000"/>
<dbReference type="PATRIC" id="fig|693216.3.peg.1891"/>
<dbReference type="HOGENOM" id="CLU_004790_0_0_6"/>
<dbReference type="Proteomes" id="UP000002069">
    <property type="component" value="Chromosome"/>
</dbReference>
<dbReference type="GO" id="GO:0005886">
    <property type="term" value="C:plasma membrane"/>
    <property type="evidence" value="ECO:0007669"/>
    <property type="project" value="UniProtKB-SubCell"/>
</dbReference>
<dbReference type="GO" id="GO:0071916">
    <property type="term" value="F:dipeptide transmembrane transporter activity"/>
    <property type="evidence" value="ECO:0007669"/>
    <property type="project" value="UniProtKB-UniRule"/>
</dbReference>
<dbReference type="GO" id="GO:0015333">
    <property type="term" value="F:peptide:proton symporter activity"/>
    <property type="evidence" value="ECO:0007669"/>
    <property type="project" value="UniProtKB-UniRule"/>
</dbReference>
<dbReference type="GO" id="GO:0042937">
    <property type="term" value="F:tripeptide transmembrane transporter activity"/>
    <property type="evidence" value="ECO:0007669"/>
    <property type="project" value="UniProtKB-UniRule"/>
</dbReference>
<dbReference type="GO" id="GO:0015031">
    <property type="term" value="P:protein transport"/>
    <property type="evidence" value="ECO:0007669"/>
    <property type="project" value="UniProtKB-KW"/>
</dbReference>
<dbReference type="CDD" id="cd17346">
    <property type="entry name" value="MFS_DtpA_like"/>
    <property type="match status" value="1"/>
</dbReference>
<dbReference type="FunFam" id="1.20.1250.20:FF:000017">
    <property type="entry name" value="Dipeptide and tripeptide permease A"/>
    <property type="match status" value="1"/>
</dbReference>
<dbReference type="Gene3D" id="1.20.1250.20">
    <property type="entry name" value="MFS general substrate transporter like domains"/>
    <property type="match status" value="1"/>
</dbReference>
<dbReference type="HAMAP" id="MF_01878">
    <property type="entry name" value="PTR2_DtpA_subfam"/>
    <property type="match status" value="1"/>
</dbReference>
<dbReference type="InterPro" id="IPR023517">
    <property type="entry name" value="AA/pep_transptr_DtpA"/>
</dbReference>
<dbReference type="InterPro" id="IPR005279">
    <property type="entry name" value="Dipep/tripep_permease"/>
</dbReference>
<dbReference type="InterPro" id="IPR020846">
    <property type="entry name" value="MFS_dom"/>
</dbReference>
<dbReference type="InterPro" id="IPR036259">
    <property type="entry name" value="MFS_trans_sf"/>
</dbReference>
<dbReference type="InterPro" id="IPR050171">
    <property type="entry name" value="MFS_Transporters"/>
</dbReference>
<dbReference type="InterPro" id="IPR000109">
    <property type="entry name" value="POT_fam"/>
</dbReference>
<dbReference type="InterPro" id="IPR018456">
    <property type="entry name" value="PTR2_symporter_CS"/>
</dbReference>
<dbReference type="NCBIfam" id="NF007137">
    <property type="entry name" value="PRK09584.1"/>
    <property type="match status" value="1"/>
</dbReference>
<dbReference type="NCBIfam" id="TIGR00924">
    <property type="entry name" value="yjdL_sub1_fam"/>
    <property type="match status" value="1"/>
</dbReference>
<dbReference type="PANTHER" id="PTHR23517:SF15">
    <property type="entry name" value="PROTON-DEPENDENT OLIGOPEPTIDE FAMILY TRANSPORT PROTEIN"/>
    <property type="match status" value="1"/>
</dbReference>
<dbReference type="PANTHER" id="PTHR23517">
    <property type="entry name" value="RESISTANCE PROTEIN MDTM, PUTATIVE-RELATED-RELATED"/>
    <property type="match status" value="1"/>
</dbReference>
<dbReference type="Pfam" id="PF00854">
    <property type="entry name" value="PTR2"/>
    <property type="match status" value="1"/>
</dbReference>
<dbReference type="SUPFAM" id="SSF103473">
    <property type="entry name" value="MFS general substrate transporter"/>
    <property type="match status" value="1"/>
</dbReference>
<dbReference type="PROSITE" id="PS50850">
    <property type="entry name" value="MFS"/>
    <property type="match status" value="1"/>
</dbReference>
<dbReference type="PROSITE" id="PS01022">
    <property type="entry name" value="PTR2_1"/>
    <property type="match status" value="1"/>
</dbReference>
<dbReference type="PROSITE" id="PS01023">
    <property type="entry name" value="PTR2_2"/>
    <property type="match status" value="1"/>
</dbReference>